<gene>
    <name type="primary">gnrh3</name>
</gene>
<name>GON3_ORYLA</name>
<reference evidence="7" key="1">
    <citation type="journal article" date="2000" name="Biochem. Biophys. Res. Commun.">
        <title>A novel form of gonadotropin-releasing hormone in the medaka, Oryzias latipes.</title>
        <authorList>
            <person name="Okubo K."/>
            <person name="Amano M."/>
            <person name="Yoshiura Y."/>
            <person name="Suetake H."/>
            <person name="Aida K."/>
        </authorList>
    </citation>
    <scope>NUCLEOTIDE SEQUENCE</scope>
    <scope>TISSUE SPECIFICITY</scope>
    <source>
        <tissue evidence="8">Brain</tissue>
    </source>
</reference>
<reference evidence="10" key="2">
    <citation type="journal article" date="2002" name="Gene">
        <title>Structural characterization of GnRH loci in the medaka genome.</title>
        <authorList>
            <person name="Okubo K."/>
            <person name="Mitani H."/>
            <person name="Naruse K."/>
            <person name="Kondo M."/>
            <person name="Shima A."/>
            <person name="Tanaka M."/>
            <person name="Asakawa S."/>
            <person name="Shimizu N."/>
            <person name="Yoshiura Y."/>
            <person name="Aida K."/>
        </authorList>
    </citation>
    <scope>NUCLEOTIDE SEQUENCE [GENOMIC DNA]</scope>
    <source>
        <strain evidence="5">Himedaka</strain>
        <strain evidence="10">HNI</strain>
    </source>
</reference>
<evidence type="ECO:0000250" key="1"/>
<evidence type="ECO:0000250" key="2">
    <source>
        <dbReference type="UniProtKB" id="P45653"/>
    </source>
</evidence>
<evidence type="ECO:0000255" key="3">
    <source>
        <dbReference type="RuleBase" id="RU000635"/>
    </source>
</evidence>
<evidence type="ECO:0000269" key="4">
    <source>
    </source>
</evidence>
<evidence type="ECO:0000269" key="5">
    <source>
    </source>
</evidence>
<evidence type="ECO:0000303" key="6">
    <source>
    </source>
</evidence>
<evidence type="ECO:0000305" key="7"/>
<evidence type="ECO:0000312" key="8">
    <source>
        <dbReference type="EMBL" id="BAB16301.1"/>
    </source>
</evidence>
<evidence type="ECO:0000312" key="9">
    <source>
        <dbReference type="EMBL" id="BAB16302.1"/>
    </source>
</evidence>
<evidence type="ECO:0000312" key="10">
    <source>
        <dbReference type="EMBL" id="BAC06425.1"/>
    </source>
</evidence>
<protein>
    <recommendedName>
        <fullName>Progonadoliberin-3</fullName>
    </recommendedName>
    <alternativeName>
        <fullName>Progonadoliberin III</fullName>
    </alternativeName>
    <alternativeName>
        <fullName>Salmon-type gonadotropin-releasing hormone</fullName>
        <shortName>sGnRH</shortName>
    </alternativeName>
    <component>
        <recommendedName>
            <fullName>Gonadoliberin-3</fullName>
        </recommendedName>
        <alternativeName>
            <fullName>Gonadoliberin III</fullName>
        </alternativeName>
        <alternativeName>
            <fullName>Gonadotropin-releasing hormone III</fullName>
            <shortName>GnRH III</shortName>
        </alternativeName>
        <alternativeName>
            <fullName>Luliberin III</fullName>
        </alternativeName>
        <alternativeName>
            <fullName>Luteinizing hormone-releasing hormone III</fullName>
            <shortName>LH-RH III</shortName>
        </alternativeName>
    </component>
    <component>
        <recommendedName>
            <fullName>GnRH-associated peptide 3</fullName>
        </recommendedName>
        <alternativeName>
            <fullName>GnRH-associated peptide III</fullName>
        </alternativeName>
    </component>
</protein>
<keyword id="KW-0027">Amidation</keyword>
<keyword id="KW-0165">Cleavage on pair of basic residues</keyword>
<keyword id="KW-0372">Hormone</keyword>
<keyword id="KW-0873">Pyrrolidone carboxylic acid</keyword>
<keyword id="KW-1185">Reference proteome</keyword>
<keyword id="KW-0964">Secreted</keyword>
<keyword id="KW-0732">Signal</keyword>
<comment type="function">
    <text evidence="2 3">Stimulates the secretion of gonadotropins.</text>
</comment>
<comment type="subcellular location">
    <subcellularLocation>
        <location evidence="2">Secreted</location>
    </subcellularLocation>
</comment>
<comment type="tissue specificity">
    <text evidence="4">Expressed in neuron cell bodies of the nucleus olfactoretinalis.</text>
</comment>
<comment type="miscellaneous">
    <text evidence="6">Teleost species possess three paralogous GnRHs: mdGnRH and cGnRH-II have been identified in tetrapods; sGnRH has no tetrapod ortholog and is thought to be a duplication of cGnRH-II.</text>
</comment>
<comment type="similarity">
    <text evidence="3 7">Belongs to the GnRH family.</text>
</comment>
<feature type="signal peptide" evidence="1">
    <location>
        <begin position="1"/>
        <end position="23"/>
    </location>
</feature>
<feature type="chain" id="PRO_0000012520" description="Progonadoliberin-3">
    <location>
        <begin position="24"/>
        <end position="90"/>
    </location>
</feature>
<feature type="peptide" id="PRO_0000012521" description="Gonadoliberin-3">
    <location>
        <begin position="24"/>
        <end position="33"/>
    </location>
</feature>
<feature type="peptide" id="PRO_0000012522" description="GnRH-associated peptide 3">
    <location>
        <begin position="37"/>
        <end position="90"/>
    </location>
</feature>
<feature type="modified residue" description="Pyrrolidone carboxylic acid" evidence="1">
    <location>
        <position position="24"/>
    </location>
</feature>
<feature type="modified residue" description="Glycine amide" evidence="1">
    <location>
        <position position="33"/>
    </location>
</feature>
<feature type="sequence conflict" description="In Ref. 2; BAC06425." evidence="7" ref="2">
    <original>V</original>
    <variation>M</variation>
    <location>
        <position position="17"/>
    </location>
</feature>
<proteinExistence type="evidence at transcript level"/>
<dbReference type="EMBL" id="AB041331">
    <property type="protein sequence ID" value="BAB16301.1"/>
    <property type="molecule type" value="mRNA"/>
</dbReference>
<dbReference type="EMBL" id="AB041332">
    <property type="protein sequence ID" value="BAB16302.1"/>
    <property type="molecule type" value="mRNA"/>
</dbReference>
<dbReference type="EMBL" id="AB041335">
    <property type="protein sequence ID" value="BAC06418.1"/>
    <property type="molecule type" value="Genomic_DNA"/>
</dbReference>
<dbReference type="EMBL" id="AB074501">
    <property type="protein sequence ID" value="BAC06425.1"/>
    <property type="molecule type" value="Genomic_DNA"/>
</dbReference>
<dbReference type="PIR" id="JC7395">
    <property type="entry name" value="JC7395"/>
</dbReference>
<dbReference type="RefSeq" id="NP_001098142.1">
    <property type="nucleotide sequence ID" value="NM_001104672.1"/>
</dbReference>
<dbReference type="FunCoup" id="Q9DD49">
    <property type="interactions" value="124"/>
</dbReference>
<dbReference type="STRING" id="8090.ENSORLP00000007327"/>
<dbReference type="GeneID" id="100049220"/>
<dbReference type="KEGG" id="ola:100049220"/>
<dbReference type="CTD" id="360141"/>
<dbReference type="eggNOG" id="ENOG502SB0W">
    <property type="taxonomic scope" value="Eukaryota"/>
</dbReference>
<dbReference type="InParanoid" id="Q9DD49"/>
<dbReference type="OrthoDB" id="8929129at2759"/>
<dbReference type="Proteomes" id="UP000001038">
    <property type="component" value="Unplaced"/>
</dbReference>
<dbReference type="Proteomes" id="UP000265180">
    <property type="component" value="Chromosome 9"/>
</dbReference>
<dbReference type="Proteomes" id="UP000265200">
    <property type="component" value="Chromosome 9"/>
</dbReference>
<dbReference type="GO" id="GO:0005576">
    <property type="term" value="C:extracellular region"/>
    <property type="evidence" value="ECO:0000250"/>
    <property type="project" value="UniProtKB"/>
</dbReference>
<dbReference type="GO" id="GO:0005615">
    <property type="term" value="C:extracellular space"/>
    <property type="evidence" value="ECO:0000250"/>
    <property type="project" value="UniProtKB"/>
</dbReference>
<dbReference type="GO" id="GO:0005183">
    <property type="term" value="F:gonadotropin hormone-releasing hormone activity"/>
    <property type="evidence" value="ECO:0000250"/>
    <property type="project" value="UniProtKB"/>
</dbReference>
<dbReference type="GO" id="GO:0031530">
    <property type="term" value="F:gonadotropin-releasing hormone receptor binding"/>
    <property type="evidence" value="ECO:0000318"/>
    <property type="project" value="GO_Central"/>
</dbReference>
<dbReference type="GO" id="GO:0007420">
    <property type="term" value="P:brain development"/>
    <property type="evidence" value="ECO:0000318"/>
    <property type="project" value="GO_Central"/>
</dbReference>
<dbReference type="GO" id="GO:0043010">
    <property type="term" value="P:camera-type eye development"/>
    <property type="evidence" value="ECO:0000318"/>
    <property type="project" value="GO_Central"/>
</dbReference>
<dbReference type="InterPro" id="IPR002012">
    <property type="entry name" value="GnRH"/>
</dbReference>
<dbReference type="InterPro" id="IPR019792">
    <property type="entry name" value="Gonadoliberin"/>
</dbReference>
<dbReference type="PANTHER" id="PTHR10522">
    <property type="entry name" value="GONADOLIBERIN"/>
    <property type="match status" value="1"/>
</dbReference>
<dbReference type="PANTHER" id="PTHR10522:SF6">
    <property type="entry name" value="PROGONADOLIBERIN-2"/>
    <property type="match status" value="1"/>
</dbReference>
<dbReference type="Pfam" id="PF00446">
    <property type="entry name" value="GnRH"/>
    <property type="match status" value="1"/>
</dbReference>
<dbReference type="PROSITE" id="PS00473">
    <property type="entry name" value="GNRH"/>
    <property type="match status" value="1"/>
</dbReference>
<sequence length="90" mass="10176">MDVSSKVVVQVLLLALVVQVTLCQHWSYGWLPGGKRSVGELEATIRMMGTGRVVSLPEDASAQTQERLRQYNLINDGSTYFDRKKRFMSQ</sequence>
<accession>Q9DD49</accession>
<accession>Q8JIQ3</accession>
<organism evidence="9">
    <name type="scientific">Oryzias latipes</name>
    <name type="common">Japanese rice fish</name>
    <name type="synonym">Japanese killifish</name>
    <dbReference type="NCBI Taxonomy" id="8090"/>
    <lineage>
        <taxon>Eukaryota</taxon>
        <taxon>Metazoa</taxon>
        <taxon>Chordata</taxon>
        <taxon>Craniata</taxon>
        <taxon>Vertebrata</taxon>
        <taxon>Euteleostomi</taxon>
        <taxon>Actinopterygii</taxon>
        <taxon>Neopterygii</taxon>
        <taxon>Teleostei</taxon>
        <taxon>Neoteleostei</taxon>
        <taxon>Acanthomorphata</taxon>
        <taxon>Ovalentaria</taxon>
        <taxon>Atherinomorphae</taxon>
        <taxon>Beloniformes</taxon>
        <taxon>Adrianichthyidae</taxon>
        <taxon>Oryziinae</taxon>
        <taxon>Oryzias</taxon>
    </lineage>
</organism>